<organism>
    <name type="scientific">Mesoplasma florum (strain ATCC 33453 / NBRC 100688 / NCTC 11704 / L1)</name>
    <name type="common">Acholeplasma florum</name>
    <dbReference type="NCBI Taxonomy" id="265311"/>
    <lineage>
        <taxon>Bacteria</taxon>
        <taxon>Bacillati</taxon>
        <taxon>Mycoplasmatota</taxon>
        <taxon>Mollicutes</taxon>
        <taxon>Entomoplasmatales</taxon>
        <taxon>Entomoplasmataceae</taxon>
        <taxon>Mesoplasma</taxon>
    </lineage>
</organism>
<sequence length="169" mass="20150">MISIDFINETDLKVKEWEDLAKQIINSGFKYLKLKNKINLSITFLDSEPAQKINQEYRNHSYIPDVTSFPIEMSPQEIKALGYQEIGDIFICIEEAERKSIKYDHSLKEEMGFLFTHGFLHLMGYDHETNEKDEEEMFFIQDEILKINKINYTIKFTEEDYKEIEEKDE</sequence>
<feature type="chain" id="PRO_0000102483" description="Endoribonuclease YbeY">
    <location>
        <begin position="1"/>
        <end position="169"/>
    </location>
</feature>
<feature type="binding site" evidence="1">
    <location>
        <position position="117"/>
    </location>
    <ligand>
        <name>Zn(2+)</name>
        <dbReference type="ChEBI" id="CHEBI:29105"/>
        <note>catalytic</note>
    </ligand>
</feature>
<feature type="binding site" evidence="1">
    <location>
        <position position="121"/>
    </location>
    <ligand>
        <name>Zn(2+)</name>
        <dbReference type="ChEBI" id="CHEBI:29105"/>
        <note>catalytic</note>
    </ligand>
</feature>
<feature type="binding site" evidence="1">
    <location>
        <position position="127"/>
    </location>
    <ligand>
        <name>Zn(2+)</name>
        <dbReference type="ChEBI" id="CHEBI:29105"/>
        <note>catalytic</note>
    </ligand>
</feature>
<protein>
    <recommendedName>
        <fullName evidence="1">Endoribonuclease YbeY</fullName>
        <ecNumber evidence="1">3.1.-.-</ecNumber>
    </recommendedName>
</protein>
<comment type="function">
    <text evidence="1">Single strand-specific metallo-endoribonuclease involved in late-stage 70S ribosome quality control and in maturation of the 3' terminus of the 16S rRNA.</text>
</comment>
<comment type="cofactor">
    <cofactor evidence="1">
        <name>Zn(2+)</name>
        <dbReference type="ChEBI" id="CHEBI:29105"/>
    </cofactor>
    <text evidence="1">Binds 1 zinc ion.</text>
</comment>
<comment type="subcellular location">
    <subcellularLocation>
        <location evidence="1">Cytoplasm</location>
    </subcellularLocation>
</comment>
<comment type="similarity">
    <text evidence="1">Belongs to the endoribonuclease YbeY family.</text>
</comment>
<dbReference type="EC" id="3.1.-.-" evidence="1"/>
<dbReference type="EMBL" id="AE017263">
    <property type="protein sequence ID" value="AAT75622.1"/>
    <property type="molecule type" value="Genomic_DNA"/>
</dbReference>
<dbReference type="RefSeq" id="WP_011183162.1">
    <property type="nucleotide sequence ID" value="NC_006055.1"/>
</dbReference>
<dbReference type="RefSeq" id="YP_053506.1">
    <property type="nucleotide sequence ID" value="NC_006055.1"/>
</dbReference>
<dbReference type="SMR" id="Q6F1K1"/>
<dbReference type="STRING" id="265311.Mfl265"/>
<dbReference type="PaxDb" id="265311-Mfl265"/>
<dbReference type="EnsemblBacteria" id="AAT75622">
    <property type="protein sequence ID" value="AAT75622"/>
    <property type="gene ID" value="Mfl265"/>
</dbReference>
<dbReference type="GeneID" id="2897597"/>
<dbReference type="KEGG" id="mfl:Mfl265"/>
<dbReference type="PATRIC" id="fig|265311.5.peg.265"/>
<dbReference type="eggNOG" id="COG0319">
    <property type="taxonomic scope" value="Bacteria"/>
</dbReference>
<dbReference type="HOGENOM" id="CLU_106710_3_0_14"/>
<dbReference type="OrthoDB" id="9807740at2"/>
<dbReference type="Proteomes" id="UP000006647">
    <property type="component" value="Chromosome"/>
</dbReference>
<dbReference type="GO" id="GO:0005737">
    <property type="term" value="C:cytoplasm"/>
    <property type="evidence" value="ECO:0007669"/>
    <property type="project" value="UniProtKB-SubCell"/>
</dbReference>
<dbReference type="GO" id="GO:0004222">
    <property type="term" value="F:metalloendopeptidase activity"/>
    <property type="evidence" value="ECO:0007669"/>
    <property type="project" value="InterPro"/>
</dbReference>
<dbReference type="GO" id="GO:0004521">
    <property type="term" value="F:RNA endonuclease activity"/>
    <property type="evidence" value="ECO:0007669"/>
    <property type="project" value="UniProtKB-UniRule"/>
</dbReference>
<dbReference type="GO" id="GO:0008270">
    <property type="term" value="F:zinc ion binding"/>
    <property type="evidence" value="ECO:0007669"/>
    <property type="project" value="UniProtKB-UniRule"/>
</dbReference>
<dbReference type="GO" id="GO:0006364">
    <property type="term" value="P:rRNA processing"/>
    <property type="evidence" value="ECO:0007669"/>
    <property type="project" value="UniProtKB-UniRule"/>
</dbReference>
<dbReference type="Gene3D" id="3.40.390.30">
    <property type="entry name" value="Metalloproteases ('zincins'), catalytic domain"/>
    <property type="match status" value="1"/>
</dbReference>
<dbReference type="HAMAP" id="MF_00009">
    <property type="entry name" value="Endoribonucl_YbeY"/>
    <property type="match status" value="1"/>
</dbReference>
<dbReference type="InterPro" id="IPR023091">
    <property type="entry name" value="MetalPrtase_cat_dom_sf_prd"/>
</dbReference>
<dbReference type="InterPro" id="IPR002036">
    <property type="entry name" value="YbeY"/>
</dbReference>
<dbReference type="InterPro" id="IPR020549">
    <property type="entry name" value="YbeY_CS"/>
</dbReference>
<dbReference type="NCBIfam" id="TIGR00043">
    <property type="entry name" value="rRNA maturation RNase YbeY"/>
    <property type="match status" value="1"/>
</dbReference>
<dbReference type="PANTHER" id="PTHR46986">
    <property type="entry name" value="ENDORIBONUCLEASE YBEY, CHLOROPLASTIC"/>
    <property type="match status" value="1"/>
</dbReference>
<dbReference type="PANTHER" id="PTHR46986:SF1">
    <property type="entry name" value="ENDORIBONUCLEASE YBEY, CHLOROPLASTIC"/>
    <property type="match status" value="1"/>
</dbReference>
<dbReference type="Pfam" id="PF02130">
    <property type="entry name" value="YbeY"/>
    <property type="match status" value="1"/>
</dbReference>
<dbReference type="SUPFAM" id="SSF55486">
    <property type="entry name" value="Metalloproteases ('zincins'), catalytic domain"/>
    <property type="match status" value="1"/>
</dbReference>
<dbReference type="PROSITE" id="PS01306">
    <property type="entry name" value="UPF0054"/>
    <property type="match status" value="1"/>
</dbReference>
<name>YBEY_MESFL</name>
<evidence type="ECO:0000255" key="1">
    <source>
        <dbReference type="HAMAP-Rule" id="MF_00009"/>
    </source>
</evidence>
<gene>
    <name evidence="1" type="primary">ybeY</name>
    <name type="ordered locus">Mfl265</name>
</gene>
<accession>Q6F1K1</accession>
<reference key="1">
    <citation type="submission" date="2004-06" db="EMBL/GenBank/DDBJ databases">
        <authorList>
            <person name="Birren B.W."/>
            <person name="Stange-Thomann N."/>
            <person name="Hafez N."/>
            <person name="DeCaprio D."/>
            <person name="Fisher S."/>
            <person name="Butler J."/>
            <person name="Elkins T."/>
            <person name="Kodira C.D."/>
            <person name="Major J."/>
            <person name="Wang S."/>
            <person name="Nicol R."/>
            <person name="Nusbaum C."/>
        </authorList>
    </citation>
    <scope>NUCLEOTIDE SEQUENCE [LARGE SCALE GENOMIC DNA]</scope>
    <source>
        <strain>ATCC 33453 / NBRC 100688 / NCTC 11704 / L1</strain>
    </source>
</reference>
<keyword id="KW-0963">Cytoplasm</keyword>
<keyword id="KW-0255">Endonuclease</keyword>
<keyword id="KW-0378">Hydrolase</keyword>
<keyword id="KW-0479">Metal-binding</keyword>
<keyword id="KW-0540">Nuclease</keyword>
<keyword id="KW-1185">Reference proteome</keyword>
<keyword id="KW-0690">Ribosome biogenesis</keyword>
<keyword id="KW-0698">rRNA processing</keyword>
<keyword id="KW-0862">Zinc</keyword>
<proteinExistence type="inferred from homology"/>